<comment type="similarity">
    <text evidence="1">Belongs to the UPF0305 family.</text>
</comment>
<organism>
    <name type="scientific">Methanococcus maripaludis (strain C5 / ATCC BAA-1333)</name>
    <dbReference type="NCBI Taxonomy" id="402880"/>
    <lineage>
        <taxon>Archaea</taxon>
        <taxon>Methanobacteriati</taxon>
        <taxon>Methanobacteriota</taxon>
        <taxon>Methanomada group</taxon>
        <taxon>Methanococci</taxon>
        <taxon>Methanococcales</taxon>
        <taxon>Methanococcaceae</taxon>
        <taxon>Methanococcus</taxon>
    </lineage>
</organism>
<accession>A4FYD1</accession>
<gene>
    <name type="ordered locus">MmarC5_0909</name>
</gene>
<proteinExistence type="inferred from homology"/>
<name>Y909_METM5</name>
<protein>
    <recommendedName>
        <fullName evidence="1">UPF0305 protein MmarC5_0909</fullName>
    </recommendedName>
</protein>
<dbReference type="EMBL" id="CP000609">
    <property type="protein sequence ID" value="ABO35215.1"/>
    <property type="molecule type" value="Genomic_DNA"/>
</dbReference>
<dbReference type="RefSeq" id="WP_011868669.1">
    <property type="nucleotide sequence ID" value="NC_009135.1"/>
</dbReference>
<dbReference type="STRING" id="402880.MmarC5_0909"/>
<dbReference type="GeneID" id="4929186"/>
<dbReference type="KEGG" id="mmq:MmarC5_0909"/>
<dbReference type="eggNOG" id="arCOG03215">
    <property type="taxonomic scope" value="Archaea"/>
</dbReference>
<dbReference type="HOGENOM" id="CLU_089549_1_0_2"/>
<dbReference type="OrthoDB" id="81482at2157"/>
<dbReference type="Proteomes" id="UP000000253">
    <property type="component" value="Chromosome"/>
</dbReference>
<dbReference type="HAMAP" id="MF_00763">
    <property type="entry name" value="UPF0305"/>
    <property type="match status" value="1"/>
</dbReference>
<dbReference type="InterPro" id="IPR019215">
    <property type="entry name" value="DUF2115"/>
</dbReference>
<dbReference type="NCBIfam" id="NF002174">
    <property type="entry name" value="PRK01022.1-1"/>
    <property type="match status" value="1"/>
</dbReference>
<dbReference type="Pfam" id="PF09888">
    <property type="entry name" value="DUF2115"/>
    <property type="match status" value="1"/>
</dbReference>
<dbReference type="PIRSF" id="PIRSF004959">
    <property type="entry name" value="UCP004959"/>
    <property type="match status" value="1"/>
</dbReference>
<evidence type="ECO:0000255" key="1">
    <source>
        <dbReference type="HAMAP-Rule" id="MF_00763"/>
    </source>
</evidence>
<sequence>MKSRKFFSKLKEESYDVSIFDLMNAKVYLEKDMAYLPEDYKKGYLEDFFTFFPEVLKEIRNKTEEELEDFEIEEEEIRKVDLRLFSMGSKRTGRDSYEKLVKTVINYLIFINKRPLHALTTRFPGGKQIIEKNGNYYCPIKNAQSNELSICEFCICKDLNEL</sequence>
<reference key="1">
    <citation type="submission" date="2007-03" db="EMBL/GenBank/DDBJ databases">
        <title>Complete sequence of chromosome of Methanococcus maripaludis C5.</title>
        <authorList>
            <consortium name="US DOE Joint Genome Institute"/>
            <person name="Copeland A."/>
            <person name="Lucas S."/>
            <person name="Lapidus A."/>
            <person name="Barry K."/>
            <person name="Glavina del Rio T."/>
            <person name="Dalin E."/>
            <person name="Tice H."/>
            <person name="Pitluck S."/>
            <person name="Chertkov O."/>
            <person name="Brettin T."/>
            <person name="Bruce D."/>
            <person name="Han C."/>
            <person name="Detter J.C."/>
            <person name="Schmutz J."/>
            <person name="Larimer F."/>
            <person name="Land M."/>
            <person name="Hauser L."/>
            <person name="Kyrpides N."/>
            <person name="Mikhailova N."/>
            <person name="Sieprawska-Lupa M."/>
            <person name="Whitman W.B."/>
            <person name="Richardson P."/>
        </authorList>
    </citation>
    <scope>NUCLEOTIDE SEQUENCE [LARGE SCALE GENOMIC DNA]</scope>
    <source>
        <strain>C5 / ATCC BAA-1333</strain>
    </source>
</reference>
<feature type="chain" id="PRO_1000046773" description="UPF0305 protein MmarC5_0909">
    <location>
        <begin position="1"/>
        <end position="162"/>
    </location>
</feature>